<dbReference type="EMBL" id="EU233882">
    <property type="protein sequence ID" value="ABY71701.1"/>
    <property type="molecule type" value="mRNA"/>
</dbReference>
<dbReference type="SMR" id="B1P1F1"/>
<dbReference type="ArachnoServer" id="AS000830">
    <property type="toxin name" value="U16-theraphotoxin-Cg1a"/>
</dbReference>
<dbReference type="GO" id="GO:0005576">
    <property type="term" value="C:extracellular region"/>
    <property type="evidence" value="ECO:0007669"/>
    <property type="project" value="UniProtKB-SubCell"/>
</dbReference>
<dbReference type="GO" id="GO:0008200">
    <property type="term" value="F:ion channel inhibitor activity"/>
    <property type="evidence" value="ECO:0007669"/>
    <property type="project" value="InterPro"/>
</dbReference>
<dbReference type="GO" id="GO:0090729">
    <property type="term" value="F:toxin activity"/>
    <property type="evidence" value="ECO:0007669"/>
    <property type="project" value="UniProtKB-KW"/>
</dbReference>
<dbReference type="InterPro" id="IPR011696">
    <property type="entry name" value="Huwentoxin-1"/>
</dbReference>
<dbReference type="Pfam" id="PF07740">
    <property type="entry name" value="Toxin_12"/>
    <property type="match status" value="1"/>
</dbReference>
<dbReference type="SUPFAM" id="SSF57059">
    <property type="entry name" value="omega toxin-like"/>
    <property type="match status" value="1"/>
</dbReference>
<proteinExistence type="evidence at protein level"/>
<sequence length="79" mass="9171">MRALLIIAGLALFLVVCNASQVNEQRKLNEMLSVMFAVEEPQERDDCLGMFSSCNPDNDKCCEGRKCDRRDQWCKWNPW</sequence>
<protein>
    <recommendedName>
        <fullName>U16-theraphotoxin-Cg1a</fullName>
        <shortName>U16-TRTX-Cg1a</shortName>
    </recommendedName>
    <alternativeName>
        <fullName>Jingzhaotoxin-25</fullName>
        <shortName>JZTX-25</shortName>
    </alternativeName>
    <alternativeName>
        <fullName>Peptide F1-25.14</fullName>
    </alternativeName>
</protein>
<feature type="signal peptide" evidence="2">
    <location>
        <begin position="1"/>
        <end position="19"/>
    </location>
</feature>
<feature type="propeptide" id="PRO_0000398451" evidence="3">
    <location>
        <begin position="20"/>
        <end position="44"/>
    </location>
</feature>
<feature type="peptide" id="PRO_0000398452" description="U16-theraphotoxin-Cg1a">
    <location>
        <begin position="45"/>
        <end position="79"/>
    </location>
</feature>
<feature type="disulfide bond" evidence="1">
    <location>
        <begin position="47"/>
        <end position="62"/>
    </location>
</feature>
<feature type="disulfide bond" evidence="1">
    <location>
        <begin position="54"/>
        <end position="67"/>
    </location>
</feature>
<feature type="disulfide bond" evidence="1">
    <location>
        <begin position="61"/>
        <end position="74"/>
    </location>
</feature>
<keyword id="KW-0903">Direct protein sequencing</keyword>
<keyword id="KW-1015">Disulfide bond</keyword>
<keyword id="KW-0872">Ion channel impairing toxin</keyword>
<keyword id="KW-0960">Knottin</keyword>
<keyword id="KW-0964">Secreted</keyword>
<keyword id="KW-0732">Signal</keyword>
<keyword id="KW-0800">Toxin</keyword>
<evidence type="ECO:0000250" key="1"/>
<evidence type="ECO:0000255" key="2"/>
<evidence type="ECO:0000269" key="3">
    <source>
    </source>
</evidence>
<evidence type="ECO:0000305" key="4"/>
<comment type="function">
    <text>Probable ion channel inhibitor.</text>
</comment>
<comment type="subcellular location">
    <subcellularLocation>
        <location>Secreted</location>
    </subcellularLocation>
</comment>
<comment type="tissue specificity">
    <text>Expressed by the venom gland.</text>
</comment>
<comment type="domain">
    <text evidence="1">The presence of a 'disulfide through disulfide knot' structurally defines this protein as a knottin.</text>
</comment>
<comment type="mass spectrometry" mass="4207.7" method="MALDI" evidence="3">
    <text>Monoisotopic mass.</text>
</comment>
<comment type="similarity">
    <text evidence="4">Belongs to the neurotoxin 10 (Hwtx-1) family. 34 (Jztx-26) subfamily.</text>
</comment>
<name>JZT25_CHIGU</name>
<organism>
    <name type="scientific">Chilobrachys guangxiensis</name>
    <name type="common">Chinese earth tiger tarantula</name>
    <name type="synonym">Chilobrachys jingzhao</name>
    <dbReference type="NCBI Taxonomy" id="278060"/>
    <lineage>
        <taxon>Eukaryota</taxon>
        <taxon>Metazoa</taxon>
        <taxon>Ecdysozoa</taxon>
        <taxon>Arthropoda</taxon>
        <taxon>Chelicerata</taxon>
        <taxon>Arachnida</taxon>
        <taxon>Araneae</taxon>
        <taxon>Mygalomorphae</taxon>
        <taxon>Theraphosidae</taxon>
        <taxon>Chilobrachys</taxon>
    </lineage>
</organism>
<accession>B1P1F1</accession>
<reference key="1">
    <citation type="journal article" date="2008" name="Cell. Mol. Life Sci.">
        <title>Molecular diversity and evolution of cystine knot toxins of the tarantula Chilobrachys jingzhao.</title>
        <authorList>
            <person name="Chen J."/>
            <person name="Deng M."/>
            <person name="He Q."/>
            <person name="Meng E."/>
            <person name="Jiang L."/>
            <person name="Liao Z."/>
            <person name="Rong M."/>
            <person name="Liang S."/>
        </authorList>
    </citation>
    <scope>NUCLEOTIDE SEQUENCE [LARGE SCALE MRNA]</scope>
    <source>
        <tissue>Venom gland</tissue>
    </source>
</reference>
<reference key="2">
    <citation type="journal article" date="2007" name="Proteomics">
        <title>Proteomic and peptidomic analysis of the venom from Chinese tarantula Chilobrachys jingzhao.</title>
        <authorList>
            <person name="Liao Z."/>
            <person name="Cao J."/>
            <person name="Li S."/>
            <person name="Yan X."/>
            <person name="Hu W."/>
            <person name="He Q."/>
            <person name="Chen J."/>
            <person name="Tang J."/>
            <person name="Xie J."/>
            <person name="Liang S."/>
        </authorList>
    </citation>
    <scope>PROTEIN SEQUENCE OF 45-79</scope>
    <scope>MASS SPECTROMETRY</scope>
    <source>
        <tissue>Venom</tissue>
    </source>
</reference>